<sequence length="447" mass="49874">MREIVHLQTGQCGNQIGAAFWQTISGEHGLDGSGVYNGTSDLQLERTNVYFNEASGNKYVPRAVLVDLEPGTMDAVRAGPFGQLFRPDNFVFGQSGAGNNWAKGHYTEGAELVDQVLDVVRREAEGCDCLQGFQITHSLGGGTGAGMGTLLISKIREEFPDRMMATFSVVPSPKVSDTVVEPYNATLSVHQLVENSDETFCIDNEALYEICMRTLKLSNPSYGDLNHLVSAVMSGVTTCLRFPGQLNSDLRKLAVNMVPFPRLHFFMVGFAPLTSRGAHSFRAVTVPELTQQMYDPKNMMAASDFRNGRYLTCSAIFRGKVSMKEVEDQMRNVQNKNSAYFVEWIPNNVQTALCSIPPRGLKMSSTFVGNSTSIQELFKRVGDQFTAMFRRKAFLHWYTGEGMDEMEFTEAESNMNDLVHEYQQYQDASISEGEEDYEEEPQVENEE</sequence>
<comment type="function">
    <text>Tubulin is the major constituent of microtubules, a cylinder consisting of laterally associated linear protofilaments composed of alpha- and beta-tubulin heterodimers. Microtubules grow by the addition of GTP-tubulin dimers to the microtubule end, where a stabilizing cap forms. Below the cap, tubulin dimers are in GDP-bound state, owing to GTPase activity of alpha-tubulin.</text>
</comment>
<comment type="cofactor">
    <cofactor evidence="1">
        <name>Mg(2+)</name>
        <dbReference type="ChEBI" id="CHEBI:18420"/>
    </cofactor>
</comment>
<comment type="subunit">
    <text>Dimer of alpha and beta chains. A typical microtubule is a hollow water-filled tube with an outer diameter of 25 nm and an inner diameter of 15 nM. Alpha-beta heterodimers associate head-to-tail to form protofilaments running lengthwise along the microtubule wall with the beta-tubulin subunit facing the microtubule plus end conferring a structural polarity. Microtubules usually have 13 protofilaments but different protofilament numbers can be found in some organisms and specialized cells.</text>
</comment>
<comment type="subcellular location">
    <subcellularLocation>
        <location>Cytoplasm</location>
        <location>Cytoskeleton</location>
    </subcellularLocation>
</comment>
<comment type="similarity">
    <text evidence="4">Belongs to the tubulin family.</text>
</comment>
<protein>
    <recommendedName>
        <fullName>Tubulin beta chain</fullName>
    </recommendedName>
    <alternativeName>
        <fullName>Beta-tubulin</fullName>
    </alternativeName>
</protein>
<dbReference type="EMBL" id="AY074934">
    <property type="protein sequence ID" value="AAM23017.1"/>
    <property type="molecule type" value="Genomic_DNA"/>
</dbReference>
<dbReference type="SMR" id="Q86ZP5"/>
<dbReference type="GO" id="GO:0005737">
    <property type="term" value="C:cytoplasm"/>
    <property type="evidence" value="ECO:0007669"/>
    <property type="project" value="UniProtKB-KW"/>
</dbReference>
<dbReference type="GO" id="GO:0005874">
    <property type="term" value="C:microtubule"/>
    <property type="evidence" value="ECO:0007669"/>
    <property type="project" value="UniProtKB-KW"/>
</dbReference>
<dbReference type="GO" id="GO:0005525">
    <property type="term" value="F:GTP binding"/>
    <property type="evidence" value="ECO:0007669"/>
    <property type="project" value="UniProtKB-KW"/>
</dbReference>
<dbReference type="GO" id="GO:0003924">
    <property type="term" value="F:GTPase activity"/>
    <property type="evidence" value="ECO:0007669"/>
    <property type="project" value="InterPro"/>
</dbReference>
<dbReference type="GO" id="GO:0046872">
    <property type="term" value="F:metal ion binding"/>
    <property type="evidence" value="ECO:0007669"/>
    <property type="project" value="UniProtKB-KW"/>
</dbReference>
<dbReference type="GO" id="GO:0005200">
    <property type="term" value="F:structural constituent of cytoskeleton"/>
    <property type="evidence" value="ECO:0007669"/>
    <property type="project" value="InterPro"/>
</dbReference>
<dbReference type="GO" id="GO:0007017">
    <property type="term" value="P:microtubule-based process"/>
    <property type="evidence" value="ECO:0007669"/>
    <property type="project" value="InterPro"/>
</dbReference>
<dbReference type="CDD" id="cd02187">
    <property type="entry name" value="beta_tubulin"/>
    <property type="match status" value="1"/>
</dbReference>
<dbReference type="FunFam" id="1.10.287.600:FF:000003">
    <property type="entry name" value="Tubulin beta chain"/>
    <property type="match status" value="1"/>
</dbReference>
<dbReference type="FunFam" id="3.30.1330.20:FF:000002">
    <property type="entry name" value="Tubulin beta chain"/>
    <property type="match status" value="1"/>
</dbReference>
<dbReference type="FunFam" id="3.40.50.1440:FF:000009">
    <property type="entry name" value="Tubulin beta chain"/>
    <property type="match status" value="1"/>
</dbReference>
<dbReference type="Gene3D" id="1.10.287.600">
    <property type="entry name" value="Helix hairpin bin"/>
    <property type="match status" value="1"/>
</dbReference>
<dbReference type="Gene3D" id="3.30.1330.20">
    <property type="entry name" value="Tubulin/FtsZ, C-terminal domain"/>
    <property type="match status" value="1"/>
</dbReference>
<dbReference type="Gene3D" id="3.40.50.1440">
    <property type="entry name" value="Tubulin/FtsZ, GTPase domain"/>
    <property type="match status" value="1"/>
</dbReference>
<dbReference type="InterPro" id="IPR013838">
    <property type="entry name" value="Beta-tubulin_BS"/>
</dbReference>
<dbReference type="InterPro" id="IPR002453">
    <property type="entry name" value="Beta_tubulin"/>
</dbReference>
<dbReference type="InterPro" id="IPR008280">
    <property type="entry name" value="Tub_FtsZ_C"/>
</dbReference>
<dbReference type="InterPro" id="IPR000217">
    <property type="entry name" value="Tubulin"/>
</dbReference>
<dbReference type="InterPro" id="IPR037103">
    <property type="entry name" value="Tubulin/FtsZ-like_C"/>
</dbReference>
<dbReference type="InterPro" id="IPR018316">
    <property type="entry name" value="Tubulin/FtsZ_2-layer-sand-dom"/>
</dbReference>
<dbReference type="InterPro" id="IPR036525">
    <property type="entry name" value="Tubulin/FtsZ_GTPase_sf"/>
</dbReference>
<dbReference type="InterPro" id="IPR023123">
    <property type="entry name" value="Tubulin_C"/>
</dbReference>
<dbReference type="InterPro" id="IPR017975">
    <property type="entry name" value="Tubulin_CS"/>
</dbReference>
<dbReference type="InterPro" id="IPR003008">
    <property type="entry name" value="Tubulin_FtsZ_GTPase"/>
</dbReference>
<dbReference type="PANTHER" id="PTHR11588">
    <property type="entry name" value="TUBULIN"/>
    <property type="match status" value="1"/>
</dbReference>
<dbReference type="Pfam" id="PF00091">
    <property type="entry name" value="Tubulin"/>
    <property type="match status" value="1"/>
</dbReference>
<dbReference type="Pfam" id="PF03953">
    <property type="entry name" value="Tubulin_C"/>
    <property type="match status" value="1"/>
</dbReference>
<dbReference type="PRINTS" id="PR01163">
    <property type="entry name" value="BETATUBULIN"/>
</dbReference>
<dbReference type="PRINTS" id="PR01161">
    <property type="entry name" value="TUBULIN"/>
</dbReference>
<dbReference type="SMART" id="SM00864">
    <property type="entry name" value="Tubulin"/>
    <property type="match status" value="1"/>
</dbReference>
<dbReference type="SMART" id="SM00865">
    <property type="entry name" value="Tubulin_C"/>
    <property type="match status" value="1"/>
</dbReference>
<dbReference type="SUPFAM" id="SSF55307">
    <property type="entry name" value="Tubulin C-terminal domain-like"/>
    <property type="match status" value="1"/>
</dbReference>
<dbReference type="SUPFAM" id="SSF52490">
    <property type="entry name" value="Tubulin nucleotide-binding domain-like"/>
    <property type="match status" value="1"/>
</dbReference>
<dbReference type="PROSITE" id="PS00227">
    <property type="entry name" value="TUBULIN"/>
    <property type="match status" value="1"/>
</dbReference>
<dbReference type="PROSITE" id="PS00228">
    <property type="entry name" value="TUBULIN_B_AUTOREG"/>
    <property type="match status" value="1"/>
</dbReference>
<reference key="1">
    <citation type="submission" date="2002-01" db="EMBL/GenBank/DDBJ databases">
        <authorList>
            <person name="Amrani L."/>
            <person name="Corio-Costet M.-F."/>
        </authorList>
    </citation>
    <scope>NUCLEOTIDE SEQUENCE [GENOMIC DNA]</scope>
</reference>
<feature type="chain" id="PRO_0000048438" description="Tubulin beta chain">
    <location>
        <begin position="1"/>
        <end position="447"/>
    </location>
</feature>
<feature type="region of interest" description="Disordered" evidence="3">
    <location>
        <begin position="424"/>
        <end position="447"/>
    </location>
</feature>
<feature type="compositionally biased region" description="Acidic residues" evidence="3">
    <location>
        <begin position="432"/>
        <end position="447"/>
    </location>
</feature>
<feature type="binding site" evidence="2">
    <location>
        <position position="11"/>
    </location>
    <ligand>
        <name>GTP</name>
        <dbReference type="ChEBI" id="CHEBI:37565"/>
    </ligand>
</feature>
<feature type="binding site" evidence="1">
    <location>
        <position position="69"/>
    </location>
    <ligand>
        <name>GTP</name>
        <dbReference type="ChEBI" id="CHEBI:37565"/>
    </ligand>
</feature>
<feature type="binding site" evidence="1">
    <location>
        <position position="69"/>
    </location>
    <ligand>
        <name>Mg(2+)</name>
        <dbReference type="ChEBI" id="CHEBI:18420"/>
    </ligand>
</feature>
<feature type="binding site" evidence="2">
    <location>
        <position position="138"/>
    </location>
    <ligand>
        <name>GTP</name>
        <dbReference type="ChEBI" id="CHEBI:37565"/>
    </ligand>
</feature>
<feature type="binding site" evidence="2">
    <location>
        <position position="142"/>
    </location>
    <ligand>
        <name>GTP</name>
        <dbReference type="ChEBI" id="CHEBI:37565"/>
    </ligand>
</feature>
<feature type="binding site" evidence="2">
    <location>
        <position position="143"/>
    </location>
    <ligand>
        <name>GTP</name>
        <dbReference type="ChEBI" id="CHEBI:37565"/>
    </ligand>
</feature>
<feature type="binding site" evidence="2">
    <location>
        <position position="144"/>
    </location>
    <ligand>
        <name>GTP</name>
        <dbReference type="ChEBI" id="CHEBI:37565"/>
    </ligand>
</feature>
<feature type="binding site" evidence="2">
    <location>
        <position position="204"/>
    </location>
    <ligand>
        <name>GTP</name>
        <dbReference type="ChEBI" id="CHEBI:37565"/>
    </ligand>
</feature>
<feature type="binding site" evidence="2">
    <location>
        <position position="226"/>
    </location>
    <ligand>
        <name>GTP</name>
        <dbReference type="ChEBI" id="CHEBI:37565"/>
    </ligand>
</feature>
<evidence type="ECO:0000250" key="1">
    <source>
        <dbReference type="UniProtKB" id="P68363"/>
    </source>
</evidence>
<evidence type="ECO:0000250" key="2">
    <source>
        <dbReference type="UniProtKB" id="Q13509"/>
    </source>
</evidence>
<evidence type="ECO:0000256" key="3">
    <source>
        <dbReference type="SAM" id="MobiDB-lite"/>
    </source>
</evidence>
<evidence type="ECO:0000305" key="4"/>
<keyword id="KW-0963">Cytoplasm</keyword>
<keyword id="KW-0206">Cytoskeleton</keyword>
<keyword id="KW-0342">GTP-binding</keyword>
<keyword id="KW-0460">Magnesium</keyword>
<keyword id="KW-0479">Metal-binding</keyword>
<keyword id="KW-0493">Microtubule</keyword>
<keyword id="KW-0547">Nucleotide-binding</keyword>
<proteinExistence type="inferred from homology"/>
<accession>Q86ZP5</accession>
<name>TBB_UNCNE</name>
<organism>
    <name type="scientific">Uncinula necator</name>
    <name type="common">Grape powdery mildew</name>
    <dbReference type="NCBI Taxonomy" id="52586"/>
    <lineage>
        <taxon>Eukaryota</taxon>
        <taxon>Fungi</taxon>
        <taxon>Dikarya</taxon>
        <taxon>Ascomycota</taxon>
        <taxon>Pezizomycotina</taxon>
        <taxon>Leotiomycetes</taxon>
        <taxon>Erysiphales</taxon>
        <taxon>Erysiphaceae</taxon>
        <taxon>Erysiphe</taxon>
    </lineage>
</organism>